<keyword id="KW-0071">Autoinducer synthesis</keyword>
<keyword id="KW-0408">Iron</keyword>
<keyword id="KW-0456">Lyase</keyword>
<keyword id="KW-0479">Metal-binding</keyword>
<keyword id="KW-0673">Quorum sensing</keyword>
<organism>
    <name type="scientific">Staphylococcus aureus (strain JH1)</name>
    <dbReference type="NCBI Taxonomy" id="359787"/>
    <lineage>
        <taxon>Bacteria</taxon>
        <taxon>Bacillati</taxon>
        <taxon>Bacillota</taxon>
        <taxon>Bacilli</taxon>
        <taxon>Bacillales</taxon>
        <taxon>Staphylococcaceae</taxon>
        <taxon>Staphylococcus</taxon>
    </lineage>
</organism>
<feature type="chain" id="PRO_1000075462" description="S-ribosylhomocysteine lyase">
    <location>
        <begin position="1"/>
        <end position="156"/>
    </location>
</feature>
<feature type="binding site" evidence="1">
    <location>
        <position position="56"/>
    </location>
    <ligand>
        <name>Fe cation</name>
        <dbReference type="ChEBI" id="CHEBI:24875"/>
    </ligand>
</feature>
<feature type="binding site" evidence="1">
    <location>
        <position position="60"/>
    </location>
    <ligand>
        <name>Fe cation</name>
        <dbReference type="ChEBI" id="CHEBI:24875"/>
    </ligand>
</feature>
<feature type="binding site" evidence="1">
    <location>
        <position position="123"/>
    </location>
    <ligand>
        <name>Fe cation</name>
        <dbReference type="ChEBI" id="CHEBI:24875"/>
    </ligand>
</feature>
<gene>
    <name evidence="1" type="primary">luxS</name>
    <name type="ordered locus">SaurJH1_2208</name>
</gene>
<reference key="1">
    <citation type="submission" date="2007-06" db="EMBL/GenBank/DDBJ databases">
        <title>Complete sequence of chromosome of Staphylococcus aureus subsp. aureus JH1.</title>
        <authorList>
            <consortium name="US DOE Joint Genome Institute"/>
            <person name="Copeland A."/>
            <person name="Lucas S."/>
            <person name="Lapidus A."/>
            <person name="Barry K."/>
            <person name="Detter J.C."/>
            <person name="Glavina del Rio T."/>
            <person name="Hammon N."/>
            <person name="Israni S."/>
            <person name="Dalin E."/>
            <person name="Tice H."/>
            <person name="Pitluck S."/>
            <person name="Chain P."/>
            <person name="Malfatti S."/>
            <person name="Shin M."/>
            <person name="Vergez L."/>
            <person name="Schmutz J."/>
            <person name="Larimer F."/>
            <person name="Land M."/>
            <person name="Hauser L."/>
            <person name="Kyrpides N."/>
            <person name="Ivanova N."/>
            <person name="Tomasz A."/>
            <person name="Richardson P."/>
        </authorList>
    </citation>
    <scope>NUCLEOTIDE SEQUENCE [LARGE SCALE GENOMIC DNA]</scope>
    <source>
        <strain>JH1</strain>
    </source>
</reference>
<accession>A6U3L9</accession>
<proteinExistence type="inferred from homology"/>
<comment type="function">
    <text evidence="1">Involved in the synthesis of autoinducer 2 (AI-2) which is secreted by bacteria and is used to communicate both the cell density and the metabolic potential of the environment. The regulation of gene expression in response to changes in cell density is called quorum sensing. Catalyzes the transformation of S-ribosylhomocysteine (RHC) to homocysteine (HC) and 4,5-dihydroxy-2,3-pentadione (DPD).</text>
</comment>
<comment type="catalytic activity">
    <reaction evidence="1">
        <text>S-(5-deoxy-D-ribos-5-yl)-L-homocysteine = (S)-4,5-dihydroxypentane-2,3-dione + L-homocysteine</text>
        <dbReference type="Rhea" id="RHEA:17753"/>
        <dbReference type="ChEBI" id="CHEBI:29484"/>
        <dbReference type="ChEBI" id="CHEBI:58195"/>
        <dbReference type="ChEBI" id="CHEBI:58199"/>
        <dbReference type="EC" id="4.4.1.21"/>
    </reaction>
</comment>
<comment type="cofactor">
    <cofactor evidence="1">
        <name>Fe cation</name>
        <dbReference type="ChEBI" id="CHEBI:24875"/>
    </cofactor>
    <text evidence="1">Binds 1 Fe cation per subunit.</text>
</comment>
<comment type="subunit">
    <text evidence="1">Homodimer.</text>
</comment>
<comment type="similarity">
    <text evidence="1">Belongs to the LuxS family.</text>
</comment>
<dbReference type="EC" id="4.4.1.21" evidence="1"/>
<dbReference type="EMBL" id="CP000736">
    <property type="protein sequence ID" value="ABR53037.1"/>
    <property type="molecule type" value="Genomic_DNA"/>
</dbReference>
<dbReference type="SMR" id="A6U3L9"/>
<dbReference type="KEGG" id="sah:SaurJH1_2208"/>
<dbReference type="HOGENOM" id="CLU_107531_2_0_9"/>
<dbReference type="GO" id="GO:0005506">
    <property type="term" value="F:iron ion binding"/>
    <property type="evidence" value="ECO:0007669"/>
    <property type="project" value="InterPro"/>
</dbReference>
<dbReference type="GO" id="GO:0043768">
    <property type="term" value="F:S-ribosylhomocysteine lyase activity"/>
    <property type="evidence" value="ECO:0007669"/>
    <property type="project" value="UniProtKB-UniRule"/>
</dbReference>
<dbReference type="GO" id="GO:0009372">
    <property type="term" value="P:quorum sensing"/>
    <property type="evidence" value="ECO:0007669"/>
    <property type="project" value="UniProtKB-UniRule"/>
</dbReference>
<dbReference type="Gene3D" id="3.30.1360.80">
    <property type="entry name" value="S-ribosylhomocysteinase (LuxS)"/>
    <property type="match status" value="1"/>
</dbReference>
<dbReference type="HAMAP" id="MF_00091">
    <property type="entry name" value="LuxS"/>
    <property type="match status" value="1"/>
</dbReference>
<dbReference type="InterPro" id="IPR037005">
    <property type="entry name" value="LuxS_sf"/>
</dbReference>
<dbReference type="InterPro" id="IPR011249">
    <property type="entry name" value="Metalloenz_LuxS/M16"/>
</dbReference>
<dbReference type="InterPro" id="IPR003815">
    <property type="entry name" value="S-ribosylhomocysteinase"/>
</dbReference>
<dbReference type="NCBIfam" id="NF002604">
    <property type="entry name" value="PRK02260.1-4"/>
    <property type="match status" value="1"/>
</dbReference>
<dbReference type="PANTHER" id="PTHR35799">
    <property type="entry name" value="S-RIBOSYLHOMOCYSTEINE LYASE"/>
    <property type="match status" value="1"/>
</dbReference>
<dbReference type="PANTHER" id="PTHR35799:SF1">
    <property type="entry name" value="S-RIBOSYLHOMOCYSTEINE LYASE"/>
    <property type="match status" value="1"/>
</dbReference>
<dbReference type="Pfam" id="PF02664">
    <property type="entry name" value="LuxS"/>
    <property type="match status" value="1"/>
</dbReference>
<dbReference type="PIRSF" id="PIRSF006160">
    <property type="entry name" value="AI2"/>
    <property type="match status" value="1"/>
</dbReference>
<dbReference type="PRINTS" id="PR01487">
    <property type="entry name" value="LUXSPROTEIN"/>
</dbReference>
<dbReference type="SUPFAM" id="SSF63411">
    <property type="entry name" value="LuxS/MPP-like metallohydrolase"/>
    <property type="match status" value="1"/>
</dbReference>
<protein>
    <recommendedName>
        <fullName evidence="1">S-ribosylhomocysteine lyase</fullName>
        <ecNumber evidence="1">4.4.1.21</ecNumber>
    </recommendedName>
    <alternativeName>
        <fullName evidence="1">AI-2 synthesis protein</fullName>
    </alternativeName>
    <alternativeName>
        <fullName evidence="1">Autoinducer-2 production protein LuxS</fullName>
    </alternativeName>
</protein>
<name>LUXS_STAA2</name>
<evidence type="ECO:0000255" key="1">
    <source>
        <dbReference type="HAMAP-Rule" id="MF_00091"/>
    </source>
</evidence>
<sequence>MTKMNVESFNLDHTKVVAPFIRLAGTMEGLNGDVIHKYDIRFKQPNKEHMDMPGLHSLEHLMAENIRNHSDKVVDLSPMGCQTGFYVSFINHDNYDDVLNIVEATLNDVLNATEVPACNEVQCGWAASHSLEGAKTIAQAFLDKRNEWHDVFGTGK</sequence>